<feature type="propeptide" id="PRO_0000397510" description="Removed in mature form; by autocatalysis" evidence="1">
    <location>
        <begin position="1"/>
        <end position="53"/>
    </location>
</feature>
<feature type="chain" id="PRO_0000397511" description="Proteasome subunit beta">
    <location>
        <begin position="54"/>
        <end position="280"/>
    </location>
</feature>
<feature type="active site" description="Nucleophile" evidence="1">
    <location>
        <position position="54"/>
    </location>
</feature>
<sequence>MSEYSAGRSGFSPAYLDRVGSSFTDFLAAAAPHLLPGSRPVPQIPVGNVTPHGTTIVSVTYDGGVLMGGDRRATMGNLISSREIEKVYPADAWSVIGIAGAAGIAIEMVRLYQVELEHYEKIEGLTLSLDGKANRLAQMIRGNLGAALQGLAVVPLFAGFDLDAAPGAAPGRIFSYDVTGGNYEERGYSAVGSGSLFARNSLKKTWRPNLDGDAATRSLVEALYDAADDDSATGGPDPVRRLYPIVYRVDAEGAVRVPDDEIAAVATRITDERSAADGQG</sequence>
<name>PSB_GEOOG</name>
<keyword id="KW-0068">Autocatalytic cleavage</keyword>
<keyword id="KW-0963">Cytoplasm</keyword>
<keyword id="KW-0378">Hydrolase</keyword>
<keyword id="KW-0645">Protease</keyword>
<keyword id="KW-0647">Proteasome</keyword>
<keyword id="KW-1185">Reference proteome</keyword>
<keyword id="KW-0888">Threonine protease</keyword>
<keyword id="KW-0865">Zymogen</keyword>
<protein>
    <recommendedName>
        <fullName evidence="1">Proteasome subunit beta</fullName>
        <ecNumber evidence="1">3.4.25.1</ecNumber>
    </recommendedName>
    <alternativeName>
        <fullName evidence="1">20S proteasome beta subunit</fullName>
    </alternativeName>
    <alternativeName>
        <fullName evidence="1">Proteasome core protein PrcB</fullName>
    </alternativeName>
</protein>
<proteinExistence type="inferred from homology"/>
<dbReference type="EC" id="3.4.25.1" evidence="1"/>
<dbReference type="EMBL" id="CP001867">
    <property type="protein sequence ID" value="ADB75316.1"/>
    <property type="molecule type" value="Genomic_DNA"/>
</dbReference>
<dbReference type="RefSeq" id="WP_012948749.1">
    <property type="nucleotide sequence ID" value="NC_013757.1"/>
</dbReference>
<dbReference type="SMR" id="D2S6E2"/>
<dbReference type="STRING" id="526225.Gobs_2682"/>
<dbReference type="MEROPS" id="T01.005"/>
<dbReference type="KEGG" id="gob:Gobs_2682"/>
<dbReference type="eggNOG" id="COG0638">
    <property type="taxonomic scope" value="Bacteria"/>
</dbReference>
<dbReference type="HOGENOM" id="CLU_035750_2_0_11"/>
<dbReference type="OrthoDB" id="5174038at2"/>
<dbReference type="UniPathway" id="UPA00997"/>
<dbReference type="Proteomes" id="UP000001382">
    <property type="component" value="Chromosome"/>
</dbReference>
<dbReference type="GO" id="GO:0005737">
    <property type="term" value="C:cytoplasm"/>
    <property type="evidence" value="ECO:0007669"/>
    <property type="project" value="UniProtKB-SubCell"/>
</dbReference>
<dbReference type="GO" id="GO:0019774">
    <property type="term" value="C:proteasome core complex, beta-subunit complex"/>
    <property type="evidence" value="ECO:0007669"/>
    <property type="project" value="UniProtKB-UniRule"/>
</dbReference>
<dbReference type="GO" id="GO:0004298">
    <property type="term" value="F:threonine-type endopeptidase activity"/>
    <property type="evidence" value="ECO:0007669"/>
    <property type="project" value="UniProtKB-UniRule"/>
</dbReference>
<dbReference type="GO" id="GO:0019941">
    <property type="term" value="P:modification-dependent protein catabolic process"/>
    <property type="evidence" value="ECO:0007669"/>
    <property type="project" value="UniProtKB-UniRule"/>
</dbReference>
<dbReference type="GO" id="GO:0010498">
    <property type="term" value="P:proteasomal protein catabolic process"/>
    <property type="evidence" value="ECO:0007669"/>
    <property type="project" value="UniProtKB-UniRule"/>
</dbReference>
<dbReference type="CDD" id="cd01906">
    <property type="entry name" value="proteasome_protease_HslV"/>
    <property type="match status" value="1"/>
</dbReference>
<dbReference type="Gene3D" id="3.60.20.10">
    <property type="entry name" value="Glutamine Phosphoribosylpyrophosphate, subunit 1, domain 1"/>
    <property type="match status" value="1"/>
</dbReference>
<dbReference type="HAMAP" id="MF_02113_B">
    <property type="entry name" value="Proteasome_B_B"/>
    <property type="match status" value="1"/>
</dbReference>
<dbReference type="InterPro" id="IPR029055">
    <property type="entry name" value="Ntn_hydrolases_N"/>
</dbReference>
<dbReference type="InterPro" id="IPR001353">
    <property type="entry name" value="Proteasome_sua/b"/>
</dbReference>
<dbReference type="InterPro" id="IPR023333">
    <property type="entry name" value="Proteasome_suB-type"/>
</dbReference>
<dbReference type="InterPro" id="IPR022483">
    <property type="entry name" value="PSB_actinobac"/>
</dbReference>
<dbReference type="NCBIfam" id="TIGR03690">
    <property type="entry name" value="20S_bact_beta"/>
    <property type="match status" value="1"/>
</dbReference>
<dbReference type="PANTHER" id="PTHR32194:SF0">
    <property type="entry name" value="ATP-DEPENDENT PROTEASE SUBUNIT HSLV"/>
    <property type="match status" value="1"/>
</dbReference>
<dbReference type="PANTHER" id="PTHR32194">
    <property type="entry name" value="METALLOPROTEASE TLDD"/>
    <property type="match status" value="1"/>
</dbReference>
<dbReference type="Pfam" id="PF00227">
    <property type="entry name" value="Proteasome"/>
    <property type="match status" value="1"/>
</dbReference>
<dbReference type="SUPFAM" id="SSF56235">
    <property type="entry name" value="N-terminal nucleophile aminohydrolases (Ntn hydrolases)"/>
    <property type="match status" value="1"/>
</dbReference>
<dbReference type="PROSITE" id="PS51476">
    <property type="entry name" value="PROTEASOME_BETA_2"/>
    <property type="match status" value="1"/>
</dbReference>
<comment type="function">
    <text evidence="1">Component of the proteasome core, a large protease complex with broad specificity involved in protein degradation.</text>
</comment>
<comment type="catalytic activity">
    <reaction evidence="1">
        <text>Cleavage of peptide bonds with very broad specificity.</text>
        <dbReference type="EC" id="3.4.25.1"/>
    </reaction>
</comment>
<comment type="activity regulation">
    <text evidence="1">The formation of the proteasomal ATPase ARC-20S proteasome complex, likely via the docking of the C-termini of ARC into the intersubunit pockets in the alpha-rings, may trigger opening of the gate for substrate entry. Interconversion between the open-gate and close-gate conformations leads to a dynamic regulation of the 20S proteasome proteolysis activity.</text>
</comment>
<comment type="pathway">
    <text evidence="1">Protein degradation; proteasomal Pup-dependent pathway.</text>
</comment>
<comment type="subunit">
    <text evidence="1">The 20S proteasome core is composed of 14 alpha and 14 beta subunits that assemble into four stacked heptameric rings, resulting in a barrel-shaped structure. The two inner rings, each composed of seven catalytic beta subunits, are sandwiched by two outer rings, each composed of seven alpha subunits. The catalytic chamber with the active sites is on the inside of the barrel. Has a gated structure, the ends of the cylinder being occluded by the N-termini of the alpha-subunits. Is capped by the proteasome-associated ATPase, ARC.</text>
</comment>
<comment type="subcellular location">
    <subcellularLocation>
        <location evidence="1">Cytoplasm</location>
    </subcellularLocation>
</comment>
<comment type="similarity">
    <text evidence="1">Belongs to the peptidase T1B family.</text>
</comment>
<gene>
    <name evidence="1" type="primary">prcB</name>
    <name type="ordered locus">Gobs_2682</name>
</gene>
<evidence type="ECO:0000255" key="1">
    <source>
        <dbReference type="HAMAP-Rule" id="MF_02113"/>
    </source>
</evidence>
<accession>D2S6E2</accession>
<reference key="1">
    <citation type="submission" date="2010-01" db="EMBL/GenBank/DDBJ databases">
        <title>The complete genome of Geodermatophilus obscurus DSM 43160.</title>
        <authorList>
            <consortium name="US DOE Joint Genome Institute (JGI-PGF)"/>
            <person name="Lucas S."/>
            <person name="Copeland A."/>
            <person name="Lapidus A."/>
            <person name="Glavina del Rio T."/>
            <person name="Dalin E."/>
            <person name="Tice H."/>
            <person name="Bruce D."/>
            <person name="Goodwin L."/>
            <person name="Pitluck S."/>
            <person name="Kyrpides N."/>
            <person name="Mavromatis K."/>
            <person name="Ivanova N."/>
            <person name="Munk A.C."/>
            <person name="Brettin T."/>
            <person name="Detter J.C."/>
            <person name="Han C."/>
            <person name="Larimer F."/>
            <person name="Land M."/>
            <person name="Hauser L."/>
            <person name="Markowitz V."/>
            <person name="Cheng J.-F."/>
            <person name="Hugenholtz P."/>
            <person name="Woyke T."/>
            <person name="Wu D."/>
            <person name="Jando M."/>
            <person name="Schneider S."/>
            <person name="Klenk H.-P."/>
            <person name="Eisen J.A."/>
        </authorList>
    </citation>
    <scope>NUCLEOTIDE SEQUENCE [LARGE SCALE GENOMIC DNA]</scope>
    <source>
        <strain>ATCC 25078 / DSM 43160 / JCM 3152 / CCUG 61914 / KCC A-0152 / KCTC 9177 / NBRC 13315 / NRRL B-3577 / G-20</strain>
    </source>
</reference>
<organism>
    <name type="scientific">Geodermatophilus obscurus (strain ATCC 25078 / DSM 43160 / JCM 3152 / CCUG 61914 / KCC A-0152 / KCTC 9177 / NBRC 13315 / NRRL B-3577 / G-20)</name>
    <dbReference type="NCBI Taxonomy" id="526225"/>
    <lineage>
        <taxon>Bacteria</taxon>
        <taxon>Bacillati</taxon>
        <taxon>Actinomycetota</taxon>
        <taxon>Actinomycetes</taxon>
        <taxon>Geodermatophilales</taxon>
        <taxon>Geodermatophilaceae</taxon>
        <taxon>Geodermatophilus</taxon>
    </lineage>
</organism>